<keyword id="KW-0028">Amino-acid biosynthesis</keyword>
<keyword id="KW-0100">Branched-chain amino acid biosynthesis</keyword>
<keyword id="KW-0432">Leucine biosynthesis</keyword>
<keyword id="KW-0456">Lyase</keyword>
<keyword id="KW-1185">Reference proteome</keyword>
<sequence>MITRGRVWKFGDNISTDAITPGRYNLTKDPNELAKIAFIEERPEFSKEVKPGDVVVGGKNFGIGSSRESAALALKAAGVGGVIAKSFGRIFFRNAVNLGLPLLIGNTDPLLDGEIVEVNWRSGEVKKEDGEVLKFKPLDSFLLAIVEEGGIIEYIRRRGDLWIQ</sequence>
<comment type="function">
    <text evidence="1">Catalyzes the isomerization between 2-isopropylmalate and 3-isopropylmalate, via the formation of 2-isopropylmaleate.</text>
</comment>
<comment type="catalytic activity">
    <reaction>
        <text>(2R,3S)-3-isopropylmalate = (2S)-2-isopropylmalate</text>
        <dbReference type="Rhea" id="RHEA:32287"/>
        <dbReference type="ChEBI" id="CHEBI:1178"/>
        <dbReference type="ChEBI" id="CHEBI:35121"/>
        <dbReference type="EC" id="4.2.1.33"/>
    </reaction>
</comment>
<comment type="pathway">
    <text>Amino-acid biosynthesis; L-leucine biosynthesis; L-leucine from 3-methyl-2-oxobutanoate: step 2/4.</text>
</comment>
<comment type="subunit">
    <text evidence="1">Heterodimer of LeuC and LeuD.</text>
</comment>
<comment type="similarity">
    <text evidence="2">Belongs to the LeuD family. LeuD type 2 subfamily.</text>
</comment>
<name>LEUD2_PYRFU</name>
<evidence type="ECO:0000250" key="1"/>
<evidence type="ECO:0000305" key="2"/>
<protein>
    <recommendedName>
        <fullName>3-isopropylmalate dehydratase small subunit 2</fullName>
        <ecNumber>4.2.1.33</ecNumber>
    </recommendedName>
    <alternativeName>
        <fullName>Alpha-IPM isomerase 2</fullName>
        <shortName>IPMI 2</shortName>
    </alternativeName>
    <alternativeName>
        <fullName>Isopropylmalate isomerase 2</fullName>
    </alternativeName>
</protein>
<dbReference type="EC" id="4.2.1.33"/>
<dbReference type="EMBL" id="AE009950">
    <property type="protein sequence ID" value="AAL81804.1"/>
    <property type="molecule type" value="Genomic_DNA"/>
</dbReference>
<dbReference type="RefSeq" id="WP_011012826.1">
    <property type="nucleotide sequence ID" value="NZ_CP023154.1"/>
</dbReference>
<dbReference type="SMR" id="Q8U0B9"/>
<dbReference type="STRING" id="186497.PF1680"/>
<dbReference type="PaxDb" id="186497-PF1680"/>
<dbReference type="KEGG" id="pfu:PF1680"/>
<dbReference type="PATRIC" id="fig|186497.12.peg.1747"/>
<dbReference type="eggNOG" id="arCOG02230">
    <property type="taxonomic scope" value="Archaea"/>
</dbReference>
<dbReference type="HOGENOM" id="CLU_081378_1_1_2"/>
<dbReference type="OrthoDB" id="6505at2157"/>
<dbReference type="PhylomeDB" id="Q8U0B9"/>
<dbReference type="UniPathway" id="UPA00048">
    <property type="reaction ID" value="UER00071"/>
</dbReference>
<dbReference type="Proteomes" id="UP000001013">
    <property type="component" value="Chromosome"/>
</dbReference>
<dbReference type="GO" id="GO:0003861">
    <property type="term" value="F:3-isopropylmalate dehydratase activity"/>
    <property type="evidence" value="ECO:0007669"/>
    <property type="project" value="UniProtKB-UniRule"/>
</dbReference>
<dbReference type="GO" id="GO:0009098">
    <property type="term" value="P:L-leucine biosynthetic process"/>
    <property type="evidence" value="ECO:0007669"/>
    <property type="project" value="UniProtKB-UniRule"/>
</dbReference>
<dbReference type="Gene3D" id="3.20.19.10">
    <property type="entry name" value="Aconitase, domain 4"/>
    <property type="match status" value="1"/>
</dbReference>
<dbReference type="HAMAP" id="MF_01032">
    <property type="entry name" value="LeuD_type2"/>
    <property type="match status" value="1"/>
</dbReference>
<dbReference type="InterPro" id="IPR015928">
    <property type="entry name" value="Aconitase/3IPM_dehydase_swvl"/>
</dbReference>
<dbReference type="InterPro" id="IPR000573">
    <property type="entry name" value="AconitaseA/IPMdHydase_ssu_swvl"/>
</dbReference>
<dbReference type="InterPro" id="IPR050075">
    <property type="entry name" value="LeuD"/>
</dbReference>
<dbReference type="InterPro" id="IPR011827">
    <property type="entry name" value="LeuD_type2/HacB/DmdB"/>
</dbReference>
<dbReference type="NCBIfam" id="TIGR02087">
    <property type="entry name" value="LEUD_arch"/>
    <property type="match status" value="1"/>
</dbReference>
<dbReference type="PANTHER" id="PTHR43345:SF9">
    <property type="entry name" value="3-ISOPROPYLMALATE DEHYDRATASE SMALL SUBUNIT"/>
    <property type="match status" value="1"/>
</dbReference>
<dbReference type="PANTHER" id="PTHR43345">
    <property type="entry name" value="3-ISOPROPYLMALATE DEHYDRATASE SMALL SUBUNIT 2-RELATED-RELATED"/>
    <property type="match status" value="1"/>
</dbReference>
<dbReference type="Pfam" id="PF00694">
    <property type="entry name" value="Aconitase_C"/>
    <property type="match status" value="1"/>
</dbReference>
<dbReference type="SUPFAM" id="SSF52016">
    <property type="entry name" value="LeuD/IlvD-like"/>
    <property type="match status" value="1"/>
</dbReference>
<gene>
    <name type="primary">leuD2</name>
    <name type="ordered locus">PF1680</name>
</gene>
<feature type="chain" id="PRO_0000141948" description="3-isopropylmalate dehydratase small subunit 2">
    <location>
        <begin position="1"/>
        <end position="164"/>
    </location>
</feature>
<reference key="1">
    <citation type="journal article" date="1999" name="Genetics">
        <title>Divergence of the hyperthermophilic archaea Pyrococcus furiosus and P. horikoshii inferred from complete genomic sequences.</title>
        <authorList>
            <person name="Maeder D.L."/>
            <person name="Weiss R.B."/>
            <person name="Dunn D.M."/>
            <person name="Cherry J.L."/>
            <person name="Gonzalez J.M."/>
            <person name="DiRuggiero J."/>
            <person name="Robb F.T."/>
        </authorList>
    </citation>
    <scope>NUCLEOTIDE SEQUENCE [LARGE SCALE GENOMIC DNA]</scope>
    <source>
        <strain>ATCC 43587 / DSM 3638 / JCM 8422 / Vc1</strain>
    </source>
</reference>
<organism>
    <name type="scientific">Pyrococcus furiosus (strain ATCC 43587 / DSM 3638 / JCM 8422 / Vc1)</name>
    <dbReference type="NCBI Taxonomy" id="186497"/>
    <lineage>
        <taxon>Archaea</taxon>
        <taxon>Methanobacteriati</taxon>
        <taxon>Methanobacteriota</taxon>
        <taxon>Thermococci</taxon>
        <taxon>Thermococcales</taxon>
        <taxon>Thermococcaceae</taxon>
        <taxon>Pyrococcus</taxon>
    </lineage>
</organism>
<proteinExistence type="inferred from homology"/>
<accession>Q8U0B9</accession>